<organism>
    <name type="scientific">Rhodococcus rhodochrous</name>
    <dbReference type="NCBI Taxonomy" id="1829"/>
    <lineage>
        <taxon>Bacteria</taxon>
        <taxon>Bacillati</taxon>
        <taxon>Actinomycetota</taxon>
        <taxon>Actinomycetes</taxon>
        <taxon>Mycobacteriales</taxon>
        <taxon>Nocardiaceae</taxon>
        <taxon>Rhodococcus</taxon>
    </lineage>
</organism>
<feature type="chain" id="PRO_0000204045" description="Aliphatic nitrilase">
    <location>
        <begin position="1"/>
        <end position="383"/>
    </location>
</feature>
<feature type="domain" description="CN hydrolase" evidence="1">
    <location>
        <begin position="13"/>
        <end position="288"/>
    </location>
</feature>
<feature type="region of interest" description="Disordered" evidence="3">
    <location>
        <begin position="359"/>
        <end position="383"/>
    </location>
</feature>
<feature type="active site" description="Proton acceptor" evidence="1">
    <location>
        <position position="53"/>
    </location>
</feature>
<feature type="active site" description="Proton donor" evidence="1">
    <location>
        <position position="136"/>
    </location>
</feature>
<feature type="active site" description="Nucleophile" evidence="1 2">
    <location>
        <position position="170"/>
    </location>
</feature>
<feature type="mutagenesis site" description="100% loss of activity." evidence="4">
    <original>C</original>
    <variation>S</variation>
    <variation>A</variation>
    <location>
        <position position="170"/>
    </location>
</feature>
<dbReference type="EC" id="3.5.5.7"/>
<dbReference type="EMBL" id="D12583">
    <property type="protein sequence ID" value="BAA02127.1"/>
    <property type="molecule type" value="Genomic_DNA"/>
</dbReference>
<dbReference type="PIR" id="A43470">
    <property type="entry name" value="A43470"/>
</dbReference>
<dbReference type="SMR" id="Q02068"/>
<dbReference type="KEGG" id="ag:BAA02127"/>
<dbReference type="BRENDA" id="3.5.5.7">
    <property type="organism ID" value="5395"/>
</dbReference>
<dbReference type="GO" id="GO:0018762">
    <property type="term" value="F:aliphatic nitrilase activity"/>
    <property type="evidence" value="ECO:0007669"/>
    <property type="project" value="UniProtKB-EC"/>
</dbReference>
<dbReference type="CDD" id="cd07564">
    <property type="entry name" value="nitrilases_CHs"/>
    <property type="match status" value="1"/>
</dbReference>
<dbReference type="Gene3D" id="3.60.110.10">
    <property type="entry name" value="Carbon-nitrogen hydrolase"/>
    <property type="match status" value="1"/>
</dbReference>
<dbReference type="InterPro" id="IPR003010">
    <property type="entry name" value="C-N_Hydrolase"/>
</dbReference>
<dbReference type="InterPro" id="IPR036526">
    <property type="entry name" value="C-N_Hydrolase_sf"/>
</dbReference>
<dbReference type="InterPro" id="IPR000132">
    <property type="entry name" value="Nitrilase/CN_hydratase_CS"/>
</dbReference>
<dbReference type="InterPro" id="IPR044149">
    <property type="entry name" value="Nitrilases_CHs"/>
</dbReference>
<dbReference type="PANTHER" id="PTHR46044:SF14">
    <property type="entry name" value="ARYLACETONITRILASE"/>
    <property type="match status" value="1"/>
</dbReference>
<dbReference type="PANTHER" id="PTHR46044">
    <property type="entry name" value="NITRILASE"/>
    <property type="match status" value="1"/>
</dbReference>
<dbReference type="Pfam" id="PF00795">
    <property type="entry name" value="CN_hydrolase"/>
    <property type="match status" value="1"/>
</dbReference>
<dbReference type="SUPFAM" id="SSF56317">
    <property type="entry name" value="Carbon-nitrogen hydrolase"/>
    <property type="match status" value="1"/>
</dbReference>
<dbReference type="PROSITE" id="PS50263">
    <property type="entry name" value="CN_HYDROLASE"/>
    <property type="match status" value="1"/>
</dbReference>
<dbReference type="PROSITE" id="PS00920">
    <property type="entry name" value="NITRIL_CHT_1"/>
    <property type="match status" value="1"/>
</dbReference>
<dbReference type="PROSITE" id="PS00921">
    <property type="entry name" value="NITRIL_CHT_2"/>
    <property type="match status" value="1"/>
</dbReference>
<comment type="function">
    <text>Acts on aliphatic nitriles such as acrylonitrile, crotononitrile and glutaronitrile.</text>
</comment>
<comment type="catalytic activity">
    <reaction>
        <text>an aliphatic nitrile + 2 H2O = a carboxylate + NH4(+)</text>
        <dbReference type="Rhea" id="RHEA:46188"/>
        <dbReference type="ChEBI" id="CHEBI:15377"/>
        <dbReference type="ChEBI" id="CHEBI:28938"/>
        <dbReference type="ChEBI" id="CHEBI:29067"/>
        <dbReference type="ChEBI" id="CHEBI:80291"/>
        <dbReference type="EC" id="3.5.5.7"/>
    </reaction>
</comment>
<comment type="similarity">
    <text evidence="5">Belongs to the carbon-nitrogen hydrolase superfamily. Nitrilase family.</text>
</comment>
<name>NRL1_RHORH</name>
<reference key="1">
    <citation type="journal article" date="1992" name="Biochemistry">
        <title>Primary structure of an aliphatic nitrile-degrading enzyme, aliphatic nitrilase, from Rhodococcus rhodochrous K22 and expression of its gene and identification of its active site residue.</title>
        <authorList>
            <person name="Kobayashi M."/>
            <person name="Yanaka N."/>
            <person name="Nagasawa T."/>
            <person name="Yamada H."/>
        </authorList>
    </citation>
    <scope>NUCLEOTIDE SEQUENCE [GENOMIC DNA]</scope>
    <scope>PARTIAL PROTEIN SEQUENCE</scope>
    <scope>MUTAGENESIS OF CYS-170</scope>
    <source>
        <strain>K22</strain>
    </source>
</reference>
<proteinExistence type="evidence at protein level"/>
<sequence length="383" mass="42276">MSSNPELKYTGKVKVATVQAEPVILDADATIDKAIGFIEEAAKNGAEFLAFPEVWIPGYPYWAWIGDVKWAVSDFIPKYHENSLTLGDDRMRRLQLAARQNNIALVMGYSEKDGASRYLSQVFIDQNGDIVANRRKLKPTHVERTIYGEGNGTDFLTHDFGFGRVGGLNCWEHFQPLSKYMMYSLNEQIHVASWPAMFALTPDVHQLSVEANDTVTRSYAIEGQTFVLASTHVIGKATQDLFAGDDDAKRALLPLGQGWARIYGPDGKSLAEPLPEDAEGLLYAELDLEQIILAKAAADPAGHYSRPDVLSLKIDTRNHTPVQYITADGRTSLNSNSRVENYRLHQLADIEKYENAEAATLPLDAPAPAPAPEQKSGRAKAEA</sequence>
<keyword id="KW-0903">Direct protein sequencing</keyword>
<keyword id="KW-0378">Hydrolase</keyword>
<evidence type="ECO:0000255" key="1">
    <source>
        <dbReference type="PROSITE-ProRule" id="PRU00054"/>
    </source>
</evidence>
<evidence type="ECO:0000255" key="2">
    <source>
        <dbReference type="PROSITE-ProRule" id="PRU10105"/>
    </source>
</evidence>
<evidence type="ECO:0000256" key="3">
    <source>
        <dbReference type="SAM" id="MobiDB-lite"/>
    </source>
</evidence>
<evidence type="ECO:0000269" key="4">
    <source>
    </source>
</evidence>
<evidence type="ECO:0000305" key="5"/>
<accession>Q02068</accession>
<protein>
    <recommendedName>
        <fullName>Aliphatic nitrilase</fullName>
        <ecNumber>3.5.5.7</ecNumber>
    </recommendedName>
</protein>